<organism>
    <name type="scientific">Xenopus laevis</name>
    <name type="common">African clawed frog</name>
    <dbReference type="NCBI Taxonomy" id="8355"/>
    <lineage>
        <taxon>Eukaryota</taxon>
        <taxon>Metazoa</taxon>
        <taxon>Chordata</taxon>
        <taxon>Craniata</taxon>
        <taxon>Vertebrata</taxon>
        <taxon>Euteleostomi</taxon>
        <taxon>Amphibia</taxon>
        <taxon>Batrachia</taxon>
        <taxon>Anura</taxon>
        <taxon>Pipoidea</taxon>
        <taxon>Pipidae</taxon>
        <taxon>Xenopodinae</taxon>
        <taxon>Xenopus</taxon>
        <taxon>Xenopus</taxon>
    </lineage>
</organism>
<comment type="function">
    <text evidence="1 4">May play a central role in the initial events of axis formation and in particular in specifying anterior head regions and their spatial relationship with trunk structures. Activates the head organizer gene cer1 by acting synergistically with siamois and mix-A/mix.1 through the 5'-TAATCT-3' element of the cer1 promoter. Also binds as a complex with lhx1/lim1 and ldb1 to the gsc promoter to stimulate expression (By similarity).</text>
</comment>
<comment type="subcellular location">
    <subcellularLocation>
        <location evidence="5">Nucleus</location>
    </subcellularLocation>
</comment>
<comment type="similarity">
    <text evidence="5">Belongs to the paired homeobox family. Bicoid subfamily.</text>
</comment>
<keyword id="KW-0217">Developmental protein</keyword>
<keyword id="KW-0238">DNA-binding</keyword>
<keyword id="KW-0371">Homeobox</keyword>
<keyword id="KW-0539">Nucleus</keyword>
<keyword id="KW-1185">Reference proteome</keyword>
<reference key="1">
    <citation type="journal article" date="1995" name="Development">
        <title>Anterior neurectoderm is progressively induced during gastrulation: the role of the Xenopus homeobox gene orthodenticle.</title>
        <authorList>
            <person name="Blitz I.L."/>
            <person name="Cho K.W."/>
        </authorList>
    </citation>
    <scope>NUCLEOTIDE SEQUENCE [MRNA]</scope>
    <scope>FUNCTION</scope>
</reference>
<reference key="2">
    <citation type="submission" date="2004-05" db="EMBL/GenBank/DDBJ databases">
        <authorList>
            <consortium name="NIH - Xenopus Gene Collection (XGC) project"/>
        </authorList>
    </citation>
    <scope>NUCLEOTIDE SEQUENCE [LARGE SCALE MRNA]</scope>
    <source>
        <tissue>Embryo</tissue>
    </source>
</reference>
<accession>Q6DKN2</accession>
<protein>
    <recommendedName>
        <fullName>Homeobox protein OTX2-B</fullName>
        <shortName>xOTX2-B</shortName>
    </recommendedName>
    <alternativeName>
        <fullName>Orthodenticle 2-B</fullName>
    </alternativeName>
    <alternativeName>
        <fullName>Orthodenticle-A-like protein B</fullName>
    </alternativeName>
</protein>
<name>OTX2B_XENLA</name>
<sequence length="289" mass="31689">MMSYLKQPPYAVNGLSLTTSGMDLLHPSVGYPATPRKQRRERTTFTRAQLDILEALFAKTRYPDIFMREEVALKINLPESRVQVWFKNRRAKCRQQQQQQQNGGQNKVRPSKKKTSPAREVSSESGTSGQFSPPCSTSGPVISSSTAPVSIWSPASISPLSDPLSTSSSCMQRSYPMTYTQASGYSQGYASSTSYFGGMDCGSYLTPMHHQLSGPGATLSPMSTNAVTSHLNQSQAALSSQAYGASSLGFNSTADCLDYKDQTASWKLNFNADCLDYKDQTSSWKFQVL</sequence>
<proteinExistence type="evidence at transcript level"/>
<feature type="chain" id="PRO_0000259762" description="Homeobox protein OTX2-B">
    <location>
        <begin position="1"/>
        <end position="289"/>
    </location>
</feature>
<feature type="DNA-binding region" description="Homeobox" evidence="2">
    <location>
        <begin position="38"/>
        <end position="97"/>
    </location>
</feature>
<feature type="region of interest" description="Disordered" evidence="3">
    <location>
        <begin position="93"/>
        <end position="140"/>
    </location>
</feature>
<feature type="compositionally biased region" description="Low complexity" evidence="3">
    <location>
        <begin position="95"/>
        <end position="106"/>
    </location>
</feature>
<feature type="compositionally biased region" description="Polar residues" evidence="3">
    <location>
        <begin position="123"/>
        <end position="140"/>
    </location>
</feature>
<feature type="site" description="Determines DNA-binding specificity" evidence="1">
    <location>
        <position position="87"/>
    </location>
</feature>
<evidence type="ECO:0000250" key="1"/>
<evidence type="ECO:0000255" key="2">
    <source>
        <dbReference type="PROSITE-ProRule" id="PRU00108"/>
    </source>
</evidence>
<evidence type="ECO:0000256" key="3">
    <source>
        <dbReference type="SAM" id="MobiDB-lite"/>
    </source>
</evidence>
<evidence type="ECO:0000269" key="4">
    <source>
    </source>
</evidence>
<evidence type="ECO:0000305" key="5"/>
<dbReference type="EMBL" id="U19813">
    <property type="protein sequence ID" value="AAB63527.1"/>
    <property type="molecule type" value="mRNA"/>
</dbReference>
<dbReference type="EMBL" id="BC070526">
    <property type="protein sequence ID" value="AAH70526.1"/>
    <property type="molecule type" value="mRNA"/>
</dbReference>
<dbReference type="RefSeq" id="NP_001084955.1">
    <property type="nucleotide sequence ID" value="NM_001091486.1"/>
</dbReference>
<dbReference type="SMR" id="Q6DKN2"/>
<dbReference type="DNASU" id="432013"/>
<dbReference type="GeneID" id="432013"/>
<dbReference type="KEGG" id="xla:432013"/>
<dbReference type="AGR" id="Xenbase:XB-GENE-485224"/>
<dbReference type="CTD" id="432013"/>
<dbReference type="Xenbase" id="XB-GENE-485224">
    <property type="gene designation" value="otx2.L"/>
</dbReference>
<dbReference type="OMA" id="QTNISMM"/>
<dbReference type="OrthoDB" id="6159439at2759"/>
<dbReference type="Proteomes" id="UP000186698">
    <property type="component" value="Chromosome 8L"/>
</dbReference>
<dbReference type="Bgee" id="432013">
    <property type="expression patterns" value="Expressed in gastrula and 5 other cell types or tissues"/>
</dbReference>
<dbReference type="GO" id="GO:0005634">
    <property type="term" value="C:nucleus"/>
    <property type="evidence" value="ECO:0000318"/>
    <property type="project" value="GO_Central"/>
</dbReference>
<dbReference type="GO" id="GO:0000981">
    <property type="term" value="F:DNA-binding transcription factor activity, RNA polymerase II-specific"/>
    <property type="evidence" value="ECO:0000318"/>
    <property type="project" value="GO_Central"/>
</dbReference>
<dbReference type="GO" id="GO:0000978">
    <property type="term" value="F:RNA polymerase II cis-regulatory region sequence-specific DNA binding"/>
    <property type="evidence" value="ECO:0000318"/>
    <property type="project" value="GO_Central"/>
</dbReference>
<dbReference type="GO" id="GO:0006357">
    <property type="term" value="P:regulation of transcription by RNA polymerase II"/>
    <property type="evidence" value="ECO:0000318"/>
    <property type="project" value="GO_Central"/>
</dbReference>
<dbReference type="CDD" id="cd00086">
    <property type="entry name" value="homeodomain"/>
    <property type="match status" value="1"/>
</dbReference>
<dbReference type="FunFam" id="1.10.10.60:FF:000142">
    <property type="entry name" value="homeobox protein OTX2 isoform X2"/>
    <property type="match status" value="1"/>
</dbReference>
<dbReference type="Gene3D" id="1.10.10.60">
    <property type="entry name" value="Homeodomain-like"/>
    <property type="match status" value="1"/>
</dbReference>
<dbReference type="InterPro" id="IPR001356">
    <property type="entry name" value="HD"/>
</dbReference>
<dbReference type="InterPro" id="IPR017970">
    <property type="entry name" value="Homeobox_CS"/>
</dbReference>
<dbReference type="InterPro" id="IPR009057">
    <property type="entry name" value="Homeodomain-like_sf"/>
</dbReference>
<dbReference type="InterPro" id="IPR003022">
    <property type="entry name" value="Otx2_TF"/>
</dbReference>
<dbReference type="InterPro" id="IPR003025">
    <property type="entry name" value="Otx_TF"/>
</dbReference>
<dbReference type="InterPro" id="IPR013851">
    <property type="entry name" value="Otx_TF_C"/>
</dbReference>
<dbReference type="PANTHER" id="PTHR45793">
    <property type="entry name" value="HOMEOBOX PROTEIN"/>
    <property type="match status" value="1"/>
</dbReference>
<dbReference type="PANTHER" id="PTHR45793:SF2">
    <property type="entry name" value="HOMEOBOX PROTEIN OTX2"/>
    <property type="match status" value="1"/>
</dbReference>
<dbReference type="Pfam" id="PF00046">
    <property type="entry name" value="Homeodomain"/>
    <property type="match status" value="1"/>
</dbReference>
<dbReference type="Pfam" id="PF03529">
    <property type="entry name" value="TF_Otx"/>
    <property type="match status" value="1"/>
</dbReference>
<dbReference type="PRINTS" id="PR01257">
    <property type="entry name" value="OTX2HOMEOBOX"/>
</dbReference>
<dbReference type="PRINTS" id="PR01255">
    <property type="entry name" value="OTXHOMEOBOX"/>
</dbReference>
<dbReference type="SMART" id="SM00389">
    <property type="entry name" value="HOX"/>
    <property type="match status" value="1"/>
</dbReference>
<dbReference type="SUPFAM" id="SSF46689">
    <property type="entry name" value="Homeodomain-like"/>
    <property type="match status" value="1"/>
</dbReference>
<dbReference type="PROSITE" id="PS00027">
    <property type="entry name" value="HOMEOBOX_1"/>
    <property type="match status" value="1"/>
</dbReference>
<dbReference type="PROSITE" id="PS50071">
    <property type="entry name" value="HOMEOBOX_2"/>
    <property type="match status" value="1"/>
</dbReference>
<gene>
    <name type="primary">otx2-b</name>
</gene>